<dbReference type="EMBL" id="AL009126">
    <property type="protein sequence ID" value="CAB13967.1"/>
    <property type="molecule type" value="Genomic_DNA"/>
</dbReference>
<dbReference type="RefSeq" id="NP_389957.1">
    <property type="nucleotide sequence ID" value="NC_000964.3"/>
</dbReference>
<dbReference type="RefSeq" id="WP_003231036.1">
    <property type="nucleotide sequence ID" value="NZ_OZ025638.1"/>
</dbReference>
<dbReference type="SMR" id="O34869"/>
<dbReference type="FunCoup" id="O34869">
    <property type="interactions" value="9"/>
</dbReference>
<dbReference type="STRING" id="224308.BSU20750"/>
<dbReference type="PaxDb" id="224308-BSU20750"/>
<dbReference type="EnsemblBacteria" id="CAB13967">
    <property type="protein sequence ID" value="CAB13967"/>
    <property type="gene ID" value="BSU_20750"/>
</dbReference>
<dbReference type="GeneID" id="939432"/>
<dbReference type="KEGG" id="bsu:BSU20750"/>
<dbReference type="PATRIC" id="fig|224308.179.peg.2265"/>
<dbReference type="InParanoid" id="O34869"/>
<dbReference type="OrthoDB" id="2931660at2"/>
<dbReference type="BioCyc" id="BSUB:BSU20750-MONOMER"/>
<dbReference type="Proteomes" id="UP000001570">
    <property type="component" value="Chromosome"/>
</dbReference>
<gene>
    <name type="primary">yopV</name>
    <name type="ordered locus">BSU20750</name>
</gene>
<reference key="1">
    <citation type="journal article" date="1997" name="Nature">
        <title>The complete genome sequence of the Gram-positive bacterium Bacillus subtilis.</title>
        <authorList>
            <person name="Kunst F."/>
            <person name="Ogasawara N."/>
            <person name="Moszer I."/>
            <person name="Albertini A.M."/>
            <person name="Alloni G."/>
            <person name="Azevedo V."/>
            <person name="Bertero M.G."/>
            <person name="Bessieres P."/>
            <person name="Bolotin A."/>
            <person name="Borchert S."/>
            <person name="Borriss R."/>
            <person name="Boursier L."/>
            <person name="Brans A."/>
            <person name="Braun M."/>
            <person name="Brignell S.C."/>
            <person name="Bron S."/>
            <person name="Brouillet S."/>
            <person name="Bruschi C.V."/>
            <person name="Caldwell B."/>
            <person name="Capuano V."/>
            <person name="Carter N.M."/>
            <person name="Choi S.-K."/>
            <person name="Codani J.-J."/>
            <person name="Connerton I.F."/>
            <person name="Cummings N.J."/>
            <person name="Daniel R.A."/>
            <person name="Denizot F."/>
            <person name="Devine K.M."/>
            <person name="Duesterhoeft A."/>
            <person name="Ehrlich S.D."/>
            <person name="Emmerson P.T."/>
            <person name="Entian K.-D."/>
            <person name="Errington J."/>
            <person name="Fabret C."/>
            <person name="Ferrari E."/>
            <person name="Foulger D."/>
            <person name="Fritz C."/>
            <person name="Fujita M."/>
            <person name="Fujita Y."/>
            <person name="Fuma S."/>
            <person name="Galizzi A."/>
            <person name="Galleron N."/>
            <person name="Ghim S.-Y."/>
            <person name="Glaser P."/>
            <person name="Goffeau A."/>
            <person name="Golightly E.J."/>
            <person name="Grandi G."/>
            <person name="Guiseppi G."/>
            <person name="Guy B.J."/>
            <person name="Haga K."/>
            <person name="Haiech J."/>
            <person name="Harwood C.R."/>
            <person name="Henaut A."/>
            <person name="Hilbert H."/>
            <person name="Holsappel S."/>
            <person name="Hosono S."/>
            <person name="Hullo M.-F."/>
            <person name="Itaya M."/>
            <person name="Jones L.-M."/>
            <person name="Joris B."/>
            <person name="Karamata D."/>
            <person name="Kasahara Y."/>
            <person name="Klaerr-Blanchard M."/>
            <person name="Klein C."/>
            <person name="Kobayashi Y."/>
            <person name="Koetter P."/>
            <person name="Koningstein G."/>
            <person name="Krogh S."/>
            <person name="Kumano M."/>
            <person name="Kurita K."/>
            <person name="Lapidus A."/>
            <person name="Lardinois S."/>
            <person name="Lauber J."/>
            <person name="Lazarevic V."/>
            <person name="Lee S.-M."/>
            <person name="Levine A."/>
            <person name="Liu H."/>
            <person name="Masuda S."/>
            <person name="Mauel C."/>
            <person name="Medigue C."/>
            <person name="Medina N."/>
            <person name="Mellado R.P."/>
            <person name="Mizuno M."/>
            <person name="Moestl D."/>
            <person name="Nakai S."/>
            <person name="Noback M."/>
            <person name="Noone D."/>
            <person name="O'Reilly M."/>
            <person name="Ogawa K."/>
            <person name="Ogiwara A."/>
            <person name="Oudega B."/>
            <person name="Park S.-H."/>
            <person name="Parro V."/>
            <person name="Pohl T.M."/>
            <person name="Portetelle D."/>
            <person name="Porwollik S."/>
            <person name="Prescott A.M."/>
            <person name="Presecan E."/>
            <person name="Pujic P."/>
            <person name="Purnelle B."/>
            <person name="Rapoport G."/>
            <person name="Rey M."/>
            <person name="Reynolds S."/>
            <person name="Rieger M."/>
            <person name="Rivolta C."/>
            <person name="Rocha E."/>
            <person name="Roche B."/>
            <person name="Rose M."/>
            <person name="Sadaie Y."/>
            <person name="Sato T."/>
            <person name="Scanlan E."/>
            <person name="Schleich S."/>
            <person name="Schroeter R."/>
            <person name="Scoffone F."/>
            <person name="Sekiguchi J."/>
            <person name="Sekowska A."/>
            <person name="Seror S.J."/>
            <person name="Serror P."/>
            <person name="Shin B.-S."/>
            <person name="Soldo B."/>
            <person name="Sorokin A."/>
            <person name="Tacconi E."/>
            <person name="Takagi T."/>
            <person name="Takahashi H."/>
            <person name="Takemaru K."/>
            <person name="Takeuchi M."/>
            <person name="Tamakoshi A."/>
            <person name="Tanaka T."/>
            <person name="Terpstra P."/>
            <person name="Tognoni A."/>
            <person name="Tosato V."/>
            <person name="Uchiyama S."/>
            <person name="Vandenbol M."/>
            <person name="Vannier F."/>
            <person name="Vassarotti A."/>
            <person name="Viari A."/>
            <person name="Wambutt R."/>
            <person name="Wedler E."/>
            <person name="Wedler H."/>
            <person name="Weitzenegger T."/>
            <person name="Winters P."/>
            <person name="Wipat A."/>
            <person name="Yamamoto H."/>
            <person name="Yamane K."/>
            <person name="Yasumoto K."/>
            <person name="Yata K."/>
            <person name="Yoshida K."/>
            <person name="Yoshikawa H.-F."/>
            <person name="Zumstein E."/>
            <person name="Yoshikawa H."/>
            <person name="Danchin A."/>
        </authorList>
    </citation>
    <scope>NUCLEOTIDE SEQUENCE [LARGE SCALE GENOMIC DNA]</scope>
    <source>
        <strain>168</strain>
    </source>
</reference>
<sequence>MLLDEKLDKLMKTILRLKAYKEEENLRRVIGEFHSIIDYAYEGMYIAEDMLREEESKGKEVSTY</sequence>
<accession>O34869</accession>
<protein>
    <recommendedName>
        <fullName>SPbeta prophage-derived uncharacterized protein YopV</fullName>
    </recommendedName>
</protein>
<feature type="chain" id="PRO_0000360634" description="SPbeta prophage-derived uncharacterized protein YopV">
    <location>
        <begin position="1"/>
        <end position="64"/>
    </location>
</feature>
<organism>
    <name type="scientific">Bacillus subtilis (strain 168)</name>
    <dbReference type="NCBI Taxonomy" id="224308"/>
    <lineage>
        <taxon>Bacteria</taxon>
        <taxon>Bacillati</taxon>
        <taxon>Bacillota</taxon>
        <taxon>Bacilli</taxon>
        <taxon>Bacillales</taxon>
        <taxon>Bacillaceae</taxon>
        <taxon>Bacillus</taxon>
    </lineage>
</organism>
<proteinExistence type="predicted"/>
<name>YOPV_BACSU</name>
<keyword id="KW-1185">Reference proteome</keyword>